<sequence length="126" mass="14237">MIFVDTNVFMYAVGRDHPLRMPAREFLEHSLEHQDRLVTSAEAMQELLNAYVPVGRNSTLDSALTLVRALTEIWPVEAADVAHARTLHHRHPGLGARDLLHLACCQRRGVTRIKTFDHTLASAFRS</sequence>
<keyword id="KW-0378">Hydrolase</keyword>
<keyword id="KW-0460">Magnesium</keyword>
<keyword id="KW-0479">Metal-binding</keyword>
<keyword id="KW-0540">Nuclease</keyword>
<keyword id="KW-1185">Reference proteome</keyword>
<keyword id="KW-1277">Toxin-antitoxin system</keyword>
<protein>
    <recommendedName>
        <fullName evidence="1">Ribonuclease VapC23</fullName>
        <shortName evidence="1">RNase VapC23</shortName>
        <ecNumber evidence="1">3.1.-.-</ecNumber>
    </recommendedName>
    <alternativeName>
        <fullName evidence="1">Toxin VapC23</fullName>
    </alternativeName>
</protein>
<reference key="1">
    <citation type="journal article" date="1998" name="Nature">
        <title>Deciphering the biology of Mycobacterium tuberculosis from the complete genome sequence.</title>
        <authorList>
            <person name="Cole S.T."/>
            <person name="Brosch R."/>
            <person name="Parkhill J."/>
            <person name="Garnier T."/>
            <person name="Churcher C.M."/>
            <person name="Harris D.E."/>
            <person name="Gordon S.V."/>
            <person name="Eiglmeier K."/>
            <person name="Gas S."/>
            <person name="Barry C.E. III"/>
            <person name="Tekaia F."/>
            <person name="Badcock K."/>
            <person name="Basham D."/>
            <person name="Brown D."/>
            <person name="Chillingworth T."/>
            <person name="Connor R."/>
            <person name="Davies R.M."/>
            <person name="Devlin K."/>
            <person name="Feltwell T."/>
            <person name="Gentles S."/>
            <person name="Hamlin N."/>
            <person name="Holroyd S."/>
            <person name="Hornsby T."/>
            <person name="Jagels K."/>
            <person name="Krogh A."/>
            <person name="McLean J."/>
            <person name="Moule S."/>
            <person name="Murphy L.D."/>
            <person name="Oliver S."/>
            <person name="Osborne J."/>
            <person name="Quail M.A."/>
            <person name="Rajandream M.A."/>
            <person name="Rogers J."/>
            <person name="Rutter S."/>
            <person name="Seeger K."/>
            <person name="Skelton S."/>
            <person name="Squares S."/>
            <person name="Squares R."/>
            <person name="Sulston J.E."/>
            <person name="Taylor K."/>
            <person name="Whitehead S."/>
            <person name="Barrell B.G."/>
        </authorList>
    </citation>
    <scope>NUCLEOTIDE SEQUENCE [LARGE SCALE GENOMIC DNA]</scope>
    <source>
        <strain>ATCC 25618 / H37Rv</strain>
    </source>
</reference>
<reference key="2">
    <citation type="journal article" date="2005" name="Nucleic Acids Res.">
        <title>Toxin-antitoxin loci are highly abundant in free-living but lost from host-associated prokaryotes.</title>
        <authorList>
            <person name="Pandey D.P."/>
            <person name="Gerdes K."/>
        </authorList>
    </citation>
    <scope>POSSIBLE FUNCTION</scope>
    <source>
        <strain>ATCC 25618 / H37Rv</strain>
    </source>
</reference>
<comment type="function">
    <text evidence="1">Toxic component of a type II toxin-antitoxin (TA) system. An RNase. The cognate antitoxin is VapB23 (By similarity).</text>
</comment>
<comment type="cofactor">
    <cofactor evidence="1">
        <name>Mg(2+)</name>
        <dbReference type="ChEBI" id="CHEBI:18420"/>
    </cofactor>
</comment>
<comment type="similarity">
    <text evidence="1">Belongs to the PINc/VapC protein family.</text>
</comment>
<accession>P9WF89</accession>
<accession>L0TAV5</accession>
<accession>O33345</accession>
<accession>Q7D6F8</accession>
<gene>
    <name evidence="1" type="primary">vapC23</name>
    <name type="ordered locus">Rv2863</name>
</gene>
<feature type="chain" id="PRO_0000407882" description="Ribonuclease VapC23">
    <location>
        <begin position="1"/>
        <end position="126"/>
    </location>
</feature>
<feature type="domain" description="PINc" evidence="1">
    <location>
        <begin position="2"/>
        <end position="118"/>
    </location>
</feature>
<feature type="binding site" evidence="1">
    <location>
        <position position="5"/>
    </location>
    <ligand>
        <name>Mg(2+)</name>
        <dbReference type="ChEBI" id="CHEBI:18420"/>
    </ligand>
</feature>
<feature type="binding site" evidence="1">
    <location>
        <position position="98"/>
    </location>
    <ligand>
        <name>Mg(2+)</name>
        <dbReference type="ChEBI" id="CHEBI:18420"/>
    </ligand>
</feature>
<evidence type="ECO:0000255" key="1">
    <source>
        <dbReference type="HAMAP-Rule" id="MF_00265"/>
    </source>
</evidence>
<organism>
    <name type="scientific">Mycobacterium tuberculosis (strain ATCC 25618 / H37Rv)</name>
    <dbReference type="NCBI Taxonomy" id="83332"/>
    <lineage>
        <taxon>Bacteria</taxon>
        <taxon>Bacillati</taxon>
        <taxon>Actinomycetota</taxon>
        <taxon>Actinomycetes</taxon>
        <taxon>Mycobacteriales</taxon>
        <taxon>Mycobacteriaceae</taxon>
        <taxon>Mycobacterium</taxon>
        <taxon>Mycobacterium tuberculosis complex</taxon>
    </lineage>
</organism>
<dbReference type="EC" id="3.1.-.-" evidence="1"/>
<dbReference type="EMBL" id="AL123456">
    <property type="protein sequence ID" value="CCP45665.1"/>
    <property type="molecule type" value="Genomic_DNA"/>
</dbReference>
<dbReference type="PIR" id="A70886">
    <property type="entry name" value="A70886"/>
</dbReference>
<dbReference type="RefSeq" id="NP_217379.1">
    <property type="nucleotide sequence ID" value="NC_000962.3"/>
</dbReference>
<dbReference type="RefSeq" id="WP_003414592.1">
    <property type="nucleotide sequence ID" value="NZ_NVQJ01000006.1"/>
</dbReference>
<dbReference type="SMR" id="P9WF89"/>
<dbReference type="STRING" id="83332.Rv2863"/>
<dbReference type="PaxDb" id="83332-Rv2863"/>
<dbReference type="DNASU" id="888195"/>
<dbReference type="GeneID" id="888195"/>
<dbReference type="KEGG" id="mtu:Rv2863"/>
<dbReference type="KEGG" id="mtv:RVBD_2863"/>
<dbReference type="TubercuList" id="Rv2863"/>
<dbReference type="eggNOG" id="COG1848">
    <property type="taxonomic scope" value="Bacteria"/>
</dbReference>
<dbReference type="InParanoid" id="P9WF89"/>
<dbReference type="OrthoDB" id="4726629at2"/>
<dbReference type="Proteomes" id="UP000001584">
    <property type="component" value="Chromosome"/>
</dbReference>
<dbReference type="GO" id="GO:0000287">
    <property type="term" value="F:magnesium ion binding"/>
    <property type="evidence" value="ECO:0007669"/>
    <property type="project" value="UniProtKB-UniRule"/>
</dbReference>
<dbReference type="GO" id="GO:0004540">
    <property type="term" value="F:RNA nuclease activity"/>
    <property type="evidence" value="ECO:0007669"/>
    <property type="project" value="InterPro"/>
</dbReference>
<dbReference type="CDD" id="cd09854">
    <property type="entry name" value="PIN_VapC-like"/>
    <property type="match status" value="1"/>
</dbReference>
<dbReference type="Gene3D" id="3.40.50.1010">
    <property type="entry name" value="5'-nuclease"/>
    <property type="match status" value="1"/>
</dbReference>
<dbReference type="HAMAP" id="MF_00265">
    <property type="entry name" value="VapC_Nob1"/>
    <property type="match status" value="1"/>
</dbReference>
<dbReference type="InterPro" id="IPR029060">
    <property type="entry name" value="PIN-like_dom_sf"/>
</dbReference>
<dbReference type="InterPro" id="IPR002716">
    <property type="entry name" value="PIN_dom"/>
</dbReference>
<dbReference type="InterPro" id="IPR052106">
    <property type="entry name" value="PINc/VapC_TA"/>
</dbReference>
<dbReference type="InterPro" id="IPR022907">
    <property type="entry name" value="VapC_family"/>
</dbReference>
<dbReference type="PANTHER" id="PTHR38826">
    <property type="entry name" value="RIBONUCLEASE VAPC13"/>
    <property type="match status" value="1"/>
</dbReference>
<dbReference type="PANTHER" id="PTHR38826:SF5">
    <property type="entry name" value="RIBONUCLEASE VAPC13"/>
    <property type="match status" value="1"/>
</dbReference>
<dbReference type="Pfam" id="PF01850">
    <property type="entry name" value="PIN"/>
    <property type="match status" value="1"/>
</dbReference>
<dbReference type="SUPFAM" id="SSF88723">
    <property type="entry name" value="PIN domain-like"/>
    <property type="match status" value="1"/>
</dbReference>
<proteinExistence type="inferred from homology"/>
<name>VPC23_MYCTU</name>